<feature type="chain" id="PRO_0000148508" description="rRNA 2'-O-methyltransferase fibrillarin">
    <location>
        <begin position="1"/>
        <end position="327"/>
    </location>
</feature>
<feature type="region of interest" description="Disordered" evidence="5">
    <location>
        <begin position="1"/>
        <end position="95"/>
    </location>
</feature>
<feature type="compositionally biased region" description="Gly residues" evidence="5">
    <location>
        <begin position="7"/>
        <end position="80"/>
    </location>
</feature>
<feature type="binding site" evidence="4">
    <location>
        <begin position="178"/>
        <end position="179"/>
    </location>
    <ligand>
        <name>S-adenosyl-L-methionine</name>
        <dbReference type="ChEBI" id="CHEBI:59789"/>
    </ligand>
</feature>
<feature type="binding site" evidence="2">
    <location>
        <begin position="197"/>
        <end position="198"/>
    </location>
    <ligand>
        <name>S-adenosyl-L-methionine</name>
        <dbReference type="ChEBI" id="CHEBI:59789"/>
    </ligand>
</feature>
<feature type="binding site" evidence="2">
    <location>
        <begin position="222"/>
        <end position="223"/>
    </location>
    <ligand>
        <name>S-adenosyl-L-methionine</name>
        <dbReference type="ChEBI" id="CHEBI:59789"/>
    </ligand>
</feature>
<feature type="binding site" evidence="2">
    <location>
        <begin position="242"/>
        <end position="245"/>
    </location>
    <ligand>
        <name>S-adenosyl-L-methionine</name>
        <dbReference type="ChEBI" id="CHEBI:59789"/>
    </ligand>
</feature>
<feature type="modified residue" description="Asymmetric dimethylarginine" evidence="3">
    <location>
        <position position="8"/>
    </location>
</feature>
<feature type="modified residue" description="Asymmetric dimethylarginine" evidence="3">
    <location>
        <position position="15"/>
    </location>
</feature>
<feature type="modified residue" description="Asymmetric dimethylarginine" evidence="3">
    <location>
        <position position="21"/>
    </location>
</feature>
<feature type="modified residue" description="Asymmetric dimethylarginine" evidence="3">
    <location>
        <position position="24"/>
    </location>
</feature>
<feature type="modified residue" description="Asymmetric dimethylarginine" evidence="3">
    <location>
        <position position="28"/>
    </location>
</feature>
<feature type="modified residue" description="Asymmetric dimethylarginine" evidence="3">
    <location>
        <position position="31"/>
    </location>
</feature>
<feature type="modified residue" description="N6-acetyllysine" evidence="2">
    <location>
        <position position="108"/>
    </location>
</feature>
<feature type="modified residue" description="Phosphoserine" evidence="2">
    <location>
        <position position="122"/>
    </location>
</feature>
<feature type="modified residue" description="N6-acetyllysine" evidence="2">
    <location>
        <position position="127"/>
    </location>
</feature>
<feature type="modified residue" description="Phosphoserine" evidence="2">
    <location>
        <position position="130"/>
    </location>
</feature>
<feature type="modified residue" description="Phosphoserine" evidence="2">
    <location>
        <position position="132"/>
    </location>
</feature>
<feature type="modified residue" description="N6-acetyllysine" evidence="2">
    <location>
        <position position="211"/>
    </location>
</feature>
<feature type="modified residue" description="N6-acetyllysine" evidence="2">
    <location>
        <position position="212"/>
    </location>
</feature>
<feature type="cross-link" description="Glycyl lysine isopeptide (Lys-Gly) (interchain with G-Cter in SUMO2)" evidence="2">
    <location>
        <position position="90"/>
    </location>
</feature>
<feature type="cross-link" description="Glycyl lysine isopeptide (Lys-Gly) (interchain with G-Cter in SUMO2)" evidence="2">
    <location>
        <position position="108"/>
    </location>
</feature>
<feature type="cross-link" description="Glycyl lysine isopeptide (Lys-Gly) (interchain with G-Cter in SUMO2)" evidence="2">
    <location>
        <position position="115"/>
    </location>
</feature>
<feature type="cross-link" description="Glycyl lysine isopeptide (Lys-Gly) (interchain with G-Cter in SUMO2)" evidence="2">
    <location>
        <position position="137"/>
    </location>
</feature>
<feature type="cross-link" description="Glycyl lysine isopeptide (Lys-Gly) (interchain with G-Cter in SUMO2)" evidence="2">
    <location>
        <position position="149"/>
    </location>
</feature>
<feature type="cross-link" description="Glycyl lysine isopeptide (Lys-Gly) (interchain with G-Cter in SUMO2)" evidence="2">
    <location>
        <position position="164"/>
    </location>
</feature>
<feature type="sequence conflict" description="In Ref. 1; CAA80307." evidence="8" ref="1">
    <original>S</original>
    <variation>R</variation>
    <location>
        <position position="6"/>
    </location>
</feature>
<feature type="sequence conflict" description="In Ref. 1; CAA80307." evidence="8" ref="1">
    <original>G</original>
    <variation>V</variation>
    <location>
        <position position="63"/>
    </location>
</feature>
<feature type="sequence conflict" description="In Ref. 1; CAA80307." evidence="8" ref="1">
    <original>V</original>
    <variation>F</variation>
    <location>
        <position position="113"/>
    </location>
</feature>
<feature type="sequence conflict" description="In Ref. 1; CAA80307." evidence="8" ref="1">
    <original>K</original>
    <variation>T</variation>
    <location>
        <position position="137"/>
    </location>
</feature>
<accession>P35550</accession>
<accession>Q99L58</accession>
<name>FBRL_MOUSE</name>
<protein>
    <recommendedName>
        <fullName>rRNA 2'-O-methyltransferase fibrillarin</fullName>
        <ecNumber evidence="9">2.1.1.-</ecNumber>
    </recommendedName>
    <alternativeName>
        <fullName>Histone-glutamine methyltransferase</fullName>
    </alternativeName>
    <alternativeName>
        <fullName>Nucleolar protein 1</fullName>
    </alternativeName>
    <alternativeName>
        <fullName evidence="8">U6 snRNA 2'-O-methyltransferase fibrillarin</fullName>
    </alternativeName>
</protein>
<reference key="1">
    <citation type="journal article" date="1993" name="Biochim. Biophys. Acta">
        <title>Molecular cloning and sequence analysis of U3 snoRNA-associated mouse fibrillarin.</title>
        <authorList>
            <person name="Turley S.J."/>
            <person name="Tan E.M."/>
            <person name="Pollard K.M."/>
        </authorList>
    </citation>
    <scope>NUCLEOTIDE SEQUENCE [MRNA]</scope>
    <source>
        <strain>BALB/cJ</strain>
        <tissue>Macrophage</tissue>
    </source>
</reference>
<reference key="2">
    <citation type="journal article" date="2004" name="Genome Res.">
        <title>The status, quality, and expansion of the NIH full-length cDNA project: the Mammalian Gene Collection (MGC).</title>
        <authorList>
            <consortium name="The MGC Project Team"/>
        </authorList>
    </citation>
    <scope>NUCLEOTIDE SEQUENCE [LARGE SCALE MRNA]</scope>
    <source>
        <strain>FVB/N</strain>
        <tissue>Liver</tissue>
        <tissue>Mammary tumor</tissue>
    </source>
</reference>
<reference key="3">
    <citation type="journal article" date="2010" name="Cell">
        <title>A tissue-specific atlas of mouse protein phosphorylation and expression.</title>
        <authorList>
            <person name="Huttlin E.L."/>
            <person name="Jedrychowski M.P."/>
            <person name="Elias J.E."/>
            <person name="Goswami T."/>
            <person name="Rad R."/>
            <person name="Beausoleil S.A."/>
            <person name="Villen J."/>
            <person name="Haas W."/>
            <person name="Sowa M.E."/>
            <person name="Gygi S.P."/>
        </authorList>
    </citation>
    <scope>IDENTIFICATION BY MASS SPECTROMETRY [LARGE SCALE ANALYSIS]</scope>
    <source>
        <tissue>Kidney</tissue>
        <tissue>Pancreas</tissue>
        <tissue>Spleen</tissue>
    </source>
</reference>
<reference key="4">
    <citation type="journal article" date="2019" name="Cell Death Differ.">
        <title>Mammalian nucleolar protein DCAF13 is essential for ovarian follicle maintenance and oocyte growth by mediating rRNA processing.</title>
        <authorList>
            <person name="Zhang J."/>
            <person name="Zhang Y.L."/>
            <person name="Zhao L.W."/>
            <person name="Guo J.X."/>
            <person name="Yu J.L."/>
            <person name="Ji S.Y."/>
            <person name="Cao L.R."/>
            <person name="Zhang S.Y."/>
            <person name="Shen L."/>
            <person name="Ou X.H."/>
            <person name="Fan H.Y."/>
        </authorList>
    </citation>
    <scope>SUBCELLULAR LOCATION</scope>
</reference>
<reference key="5">
    <citation type="journal article" date="2020" name="Mol. Cell">
        <title>LARP7-mediated U6 snRNA modification ensures splicing fidelity and spermatogenesis in mice.</title>
        <authorList>
            <person name="Wang X."/>
            <person name="Li Z.T."/>
            <person name="Yan Y."/>
            <person name="Lin P."/>
            <person name="Tang W."/>
            <person name="Hasler D."/>
            <person name="Meduri R."/>
            <person name="Li Y."/>
            <person name="Hua M.M."/>
            <person name="Qi H.T."/>
            <person name="Lin D.H."/>
            <person name="Shi H.J."/>
            <person name="Hui J."/>
            <person name="Li J."/>
            <person name="Li D."/>
            <person name="Yang J.H."/>
            <person name="Lin J."/>
            <person name="Meister G."/>
            <person name="Fischer U."/>
            <person name="Liu M.F."/>
        </authorList>
    </citation>
    <scope>FUNCTION</scope>
    <scope>IDENTIFICATION IN BOX C/D RNP COMPLEX</scope>
    <scope>CATALYTIC ACTIVITY</scope>
    <scope>SUBCELLULAR LOCATION</scope>
</reference>
<organism>
    <name type="scientific">Mus musculus</name>
    <name type="common">Mouse</name>
    <dbReference type="NCBI Taxonomy" id="10090"/>
    <lineage>
        <taxon>Eukaryota</taxon>
        <taxon>Metazoa</taxon>
        <taxon>Chordata</taxon>
        <taxon>Craniata</taxon>
        <taxon>Vertebrata</taxon>
        <taxon>Euteleostomi</taxon>
        <taxon>Mammalia</taxon>
        <taxon>Eutheria</taxon>
        <taxon>Euarchontoglires</taxon>
        <taxon>Glires</taxon>
        <taxon>Rodentia</taxon>
        <taxon>Myomorpha</taxon>
        <taxon>Muroidea</taxon>
        <taxon>Muridae</taxon>
        <taxon>Murinae</taxon>
        <taxon>Mus</taxon>
        <taxon>Mus</taxon>
    </lineage>
</organism>
<gene>
    <name evidence="10" type="primary">Fbl</name>
</gene>
<evidence type="ECO:0000250" key="1">
    <source>
        <dbReference type="UniProtKB" id="P15646"/>
    </source>
</evidence>
<evidence type="ECO:0000250" key="2">
    <source>
        <dbReference type="UniProtKB" id="P22087"/>
    </source>
</evidence>
<evidence type="ECO:0000250" key="3">
    <source>
        <dbReference type="UniProtKB" id="P22509"/>
    </source>
</evidence>
<evidence type="ECO:0000250" key="4">
    <source>
        <dbReference type="UniProtKB" id="Q9Y9U3"/>
    </source>
</evidence>
<evidence type="ECO:0000256" key="5">
    <source>
        <dbReference type="SAM" id="MobiDB-lite"/>
    </source>
</evidence>
<evidence type="ECO:0000269" key="6">
    <source>
    </source>
</evidence>
<evidence type="ECO:0000269" key="7">
    <source>
    </source>
</evidence>
<evidence type="ECO:0000305" key="8"/>
<evidence type="ECO:0000305" key="9">
    <source>
    </source>
</evidence>
<evidence type="ECO:0000312" key="10">
    <source>
        <dbReference type="MGI" id="MGI:95486"/>
    </source>
</evidence>
<sequence>MKPGFSPRGGGFGGRGGFGDRGGRGGGRGGRGGFGGGRGGFGGGGRGRGGGGGGFRGRGGGGGRGGGFQSGGNRGRGGGRGGKRGNQSGKNVMVEPHRHEGVFICRGKEDALVTKNLVPGESVYGEKRVSISEGDDKIEYRAWNPFRSKLAAAILGGVDQIHIKPGAKVLYLGAASGTTVSHVSDIVGPDGLVYAVEFSHRSGRDLINLAKKRTNIIPVIEDARHPHKYRMLIAMVDVIFADVAQPDQTRIVALNAHTFLRNGGHFVISIKANCIDSTASAEAVFASEVKKMQQENMKPQEQLTLEPYERDHAVVVGVYRPPPKVKN</sequence>
<dbReference type="EC" id="2.1.1.-" evidence="9"/>
<dbReference type="EMBL" id="Z22593">
    <property type="protein sequence ID" value="CAA80307.1"/>
    <property type="molecule type" value="mRNA"/>
</dbReference>
<dbReference type="EMBL" id="BC003813">
    <property type="protein sequence ID" value="AAH03813.1"/>
    <property type="molecule type" value="mRNA"/>
</dbReference>
<dbReference type="EMBL" id="BC092274">
    <property type="protein sequence ID" value="AAH92274.1"/>
    <property type="molecule type" value="mRNA"/>
</dbReference>
<dbReference type="CCDS" id="CCDS21036.1"/>
<dbReference type="PIR" id="S38342">
    <property type="entry name" value="S38342"/>
</dbReference>
<dbReference type="RefSeq" id="NP_032017.2">
    <property type="nucleotide sequence ID" value="NM_007991.3"/>
</dbReference>
<dbReference type="SMR" id="P35550"/>
<dbReference type="BioGRID" id="199604">
    <property type="interactions" value="37"/>
</dbReference>
<dbReference type="CORUM" id="P35550"/>
<dbReference type="FunCoup" id="P35550">
    <property type="interactions" value="3462"/>
</dbReference>
<dbReference type="IntAct" id="P35550">
    <property type="interactions" value="38"/>
</dbReference>
<dbReference type="MINT" id="P35550"/>
<dbReference type="STRING" id="10090.ENSMUSP00000037613"/>
<dbReference type="GlyGen" id="P35550">
    <property type="glycosylation" value="1 site, 1 O-linked glycan (1 site)"/>
</dbReference>
<dbReference type="iPTMnet" id="P35550"/>
<dbReference type="PhosphoSitePlus" id="P35550"/>
<dbReference type="SwissPalm" id="P35550"/>
<dbReference type="jPOST" id="P35550"/>
<dbReference type="PaxDb" id="10090-ENSMUSP00000037613"/>
<dbReference type="PeptideAtlas" id="P35550"/>
<dbReference type="ProteomicsDB" id="270959"/>
<dbReference type="Pumba" id="P35550"/>
<dbReference type="Antibodypedia" id="3594">
    <property type="antibodies" value="414 antibodies from 39 providers"/>
</dbReference>
<dbReference type="DNASU" id="14113"/>
<dbReference type="Ensembl" id="ENSMUST00000042405.8">
    <property type="protein sequence ID" value="ENSMUSP00000037613.7"/>
    <property type="gene ID" value="ENSMUSG00000046865.8"/>
</dbReference>
<dbReference type="GeneID" id="14113"/>
<dbReference type="KEGG" id="mmu:14113"/>
<dbReference type="UCSC" id="uc009fxy.1">
    <property type="organism name" value="mouse"/>
</dbReference>
<dbReference type="AGR" id="MGI:95486"/>
<dbReference type="CTD" id="2091"/>
<dbReference type="MGI" id="MGI:95486">
    <property type="gene designation" value="Fbl"/>
</dbReference>
<dbReference type="VEuPathDB" id="HostDB:ENSMUSG00000046865"/>
<dbReference type="eggNOG" id="KOG1596">
    <property type="taxonomic scope" value="Eukaryota"/>
</dbReference>
<dbReference type="GeneTree" id="ENSGT00550000074792"/>
<dbReference type="HOGENOM" id="CLU_059055_1_0_1"/>
<dbReference type="InParanoid" id="P35550"/>
<dbReference type="OMA" id="WNPNKSK"/>
<dbReference type="OrthoDB" id="1859733at2759"/>
<dbReference type="PhylomeDB" id="P35550"/>
<dbReference type="TreeFam" id="TF300639"/>
<dbReference type="Reactome" id="R-MMU-6791226">
    <property type="pathway name" value="Major pathway of rRNA processing in the nucleolus and cytosol"/>
</dbReference>
<dbReference type="BioGRID-ORCS" id="14113">
    <property type="hits" value="22 hits in 77 CRISPR screens"/>
</dbReference>
<dbReference type="CD-CODE" id="8BEB9125">
    <property type="entry name" value="Cajal body"/>
</dbReference>
<dbReference type="ChiTaRS" id="Fbl">
    <property type="organism name" value="mouse"/>
</dbReference>
<dbReference type="PRO" id="PR:P35550"/>
<dbReference type="Proteomes" id="UP000000589">
    <property type="component" value="Chromosome 7"/>
</dbReference>
<dbReference type="RNAct" id="P35550">
    <property type="molecule type" value="protein"/>
</dbReference>
<dbReference type="Bgee" id="ENSMUSG00000046865">
    <property type="expression patterns" value="Expressed in ectoplacental cone and 70 other cell types or tissues"/>
</dbReference>
<dbReference type="ExpressionAtlas" id="P35550">
    <property type="expression patterns" value="baseline and differential"/>
</dbReference>
<dbReference type="GO" id="GO:0015030">
    <property type="term" value="C:Cajal body"/>
    <property type="evidence" value="ECO:0000314"/>
    <property type="project" value="MGI"/>
</dbReference>
<dbReference type="GO" id="GO:0001650">
    <property type="term" value="C:fibrillar center"/>
    <property type="evidence" value="ECO:0007669"/>
    <property type="project" value="Ensembl"/>
</dbReference>
<dbReference type="GO" id="GO:0001652">
    <property type="term" value="C:granular component"/>
    <property type="evidence" value="ECO:0000314"/>
    <property type="project" value="MGI"/>
</dbReference>
<dbReference type="GO" id="GO:0005730">
    <property type="term" value="C:nucleolus"/>
    <property type="evidence" value="ECO:0000314"/>
    <property type="project" value="MGI"/>
</dbReference>
<dbReference type="GO" id="GO:0005634">
    <property type="term" value="C:nucleus"/>
    <property type="evidence" value="ECO:0000314"/>
    <property type="project" value="UniProtKB"/>
</dbReference>
<dbReference type="GO" id="GO:0032040">
    <property type="term" value="C:small-subunit processome"/>
    <property type="evidence" value="ECO:0000250"/>
    <property type="project" value="UniProtKB"/>
</dbReference>
<dbReference type="GO" id="GO:0051117">
    <property type="term" value="F:ATPase binding"/>
    <property type="evidence" value="ECO:0007669"/>
    <property type="project" value="Ensembl"/>
</dbReference>
<dbReference type="GO" id="GO:1990259">
    <property type="term" value="F:histone H2AQ104 methyltransferase activity"/>
    <property type="evidence" value="ECO:0000250"/>
    <property type="project" value="UniProtKB"/>
</dbReference>
<dbReference type="GO" id="GO:0003723">
    <property type="term" value="F:RNA binding"/>
    <property type="evidence" value="ECO:0000353"/>
    <property type="project" value="MGI"/>
</dbReference>
<dbReference type="GO" id="GO:0001094">
    <property type="term" value="F:TFIID-class transcription factor complex binding"/>
    <property type="evidence" value="ECO:0007669"/>
    <property type="project" value="Ensembl"/>
</dbReference>
<dbReference type="GO" id="GO:0180021">
    <property type="term" value="F:U6 snRNA 2'-O-ribose methyltransferase activity"/>
    <property type="evidence" value="ECO:0007669"/>
    <property type="project" value="RHEA"/>
</dbReference>
<dbReference type="GO" id="GO:0042274">
    <property type="term" value="P:ribosomal small subunit biogenesis"/>
    <property type="evidence" value="ECO:0000250"/>
    <property type="project" value="UniProtKB"/>
</dbReference>
<dbReference type="GO" id="GO:0031167">
    <property type="term" value="P:rRNA methylation"/>
    <property type="evidence" value="ECO:0000250"/>
    <property type="project" value="UniProtKB"/>
</dbReference>
<dbReference type="GO" id="GO:0016074">
    <property type="term" value="P:sno(s)RNA metabolic process"/>
    <property type="evidence" value="ECO:0000315"/>
    <property type="project" value="MGI"/>
</dbReference>
<dbReference type="GO" id="GO:0048254">
    <property type="term" value="P:snoRNA localization"/>
    <property type="evidence" value="ECO:0007669"/>
    <property type="project" value="Ensembl"/>
</dbReference>
<dbReference type="FunFam" id="3.30.200.20:FF:000056">
    <property type="entry name" value="Fibrillarin like 1"/>
    <property type="match status" value="1"/>
</dbReference>
<dbReference type="FunFam" id="3.40.50.150:FF:000001">
    <property type="entry name" value="Fibrillarin like 1"/>
    <property type="match status" value="1"/>
</dbReference>
<dbReference type="Gene3D" id="3.30.200.20">
    <property type="entry name" value="Phosphorylase Kinase, domain 1"/>
    <property type="match status" value="1"/>
</dbReference>
<dbReference type="Gene3D" id="3.40.50.150">
    <property type="entry name" value="Vaccinia Virus protein VP39"/>
    <property type="match status" value="1"/>
</dbReference>
<dbReference type="HAMAP" id="MF_00351">
    <property type="entry name" value="RNA_methyltransf_FlpA"/>
    <property type="match status" value="1"/>
</dbReference>
<dbReference type="InterPro" id="IPR000692">
    <property type="entry name" value="Fibrillarin"/>
</dbReference>
<dbReference type="InterPro" id="IPR020813">
    <property type="entry name" value="Fibrillarin_CS"/>
</dbReference>
<dbReference type="InterPro" id="IPR029063">
    <property type="entry name" value="SAM-dependent_MTases_sf"/>
</dbReference>
<dbReference type="NCBIfam" id="NF003276">
    <property type="entry name" value="PRK04266.1-2"/>
    <property type="match status" value="1"/>
</dbReference>
<dbReference type="PANTHER" id="PTHR10335:SF4">
    <property type="entry name" value="RRNA 2'-O-METHYLTRANSFERASE FIBRILLARIN"/>
    <property type="match status" value="1"/>
</dbReference>
<dbReference type="PANTHER" id="PTHR10335">
    <property type="entry name" value="RRNA 2-O-METHYLTRANSFERASE FIBRILLARIN"/>
    <property type="match status" value="1"/>
</dbReference>
<dbReference type="Pfam" id="PF01269">
    <property type="entry name" value="Fibrillarin"/>
    <property type="match status" value="1"/>
</dbReference>
<dbReference type="PRINTS" id="PR00052">
    <property type="entry name" value="FIBRILLARIN"/>
</dbReference>
<dbReference type="SMART" id="SM01206">
    <property type="entry name" value="Fibrillarin"/>
    <property type="match status" value="1"/>
</dbReference>
<dbReference type="SUPFAM" id="SSF53335">
    <property type="entry name" value="S-adenosyl-L-methionine-dependent methyltransferases"/>
    <property type="match status" value="1"/>
</dbReference>
<dbReference type="PROSITE" id="PS00566">
    <property type="entry name" value="FIBRILLARIN"/>
    <property type="match status" value="1"/>
</dbReference>
<keyword id="KW-0007">Acetylation</keyword>
<keyword id="KW-1017">Isopeptide bond</keyword>
<keyword id="KW-0488">Methylation</keyword>
<keyword id="KW-0489">Methyltransferase</keyword>
<keyword id="KW-0539">Nucleus</keyword>
<keyword id="KW-0597">Phosphoprotein</keyword>
<keyword id="KW-1185">Reference proteome</keyword>
<keyword id="KW-0687">Ribonucleoprotein</keyword>
<keyword id="KW-0694">RNA-binding</keyword>
<keyword id="KW-0698">rRNA processing</keyword>
<keyword id="KW-0949">S-adenosyl-L-methionine</keyword>
<keyword id="KW-0808">Transferase</keyword>
<keyword id="KW-0832">Ubl conjugation</keyword>
<proteinExistence type="evidence at protein level"/>
<comment type="function">
    <text evidence="1 2 7">S-adenosyl-L-methionine-dependent methyltransferase that has the ability to methylate both RNAs and proteins (PubMed:32017896). Involved in pre-rRNA processing by catalyzing the site-specific 2'-hydroxyl methylation of ribose moieties in pre-ribosomal RNA (By similarity). Site specificity is provided by a guide RNA that base pairs with the substrate (By similarity). Methylation occurs at a characteristic distance from the sequence involved in base pairing with the guide RNA (By similarity). Probably catalyzes 2'-O-methylation of U6 snRNAs in box C/D RNP complexes (PubMed:32017896). U6 snRNA 2'-O-methylation is required for mRNA splicing fidelity (PubMed:32017896). Also acts as a protein methyltransferase by mediating methylation of 'Gln-105' of histone H2A (H2AQ104me), a modification that impairs binding of the FACT complex and is specifically present at 35S ribosomal DNA locus (By similarity). Part of the small subunit (SSU) processome, first precursor of the small eukaryotic ribosomal subunit. During the assembly of the SSU processome in the nucleolus, many ribosome biogenesis factors, an RNA chaperone and ribosomal proteins associate with the nascent pre-rRNA and work in concert to generate RNA folding, modifications, rearrangements and cleavage as well as targeted degradation of pre-ribosomal RNA by the RNA exosome (By similarity).</text>
</comment>
<comment type="catalytic activity">
    <reaction evidence="2">
        <text>L-glutaminyl-[histone H2A] + S-adenosyl-L-methionine = N(5)-methyl-L-glutaminyl-[histone H2A] + S-adenosyl-L-homocysteine + H(+)</text>
        <dbReference type="Rhea" id="RHEA:50904"/>
        <dbReference type="Rhea" id="RHEA-COMP:12837"/>
        <dbReference type="Rhea" id="RHEA-COMP:12839"/>
        <dbReference type="ChEBI" id="CHEBI:15378"/>
        <dbReference type="ChEBI" id="CHEBI:30011"/>
        <dbReference type="ChEBI" id="CHEBI:57856"/>
        <dbReference type="ChEBI" id="CHEBI:59789"/>
        <dbReference type="ChEBI" id="CHEBI:61891"/>
    </reaction>
</comment>
<comment type="catalytic activity">
    <reaction evidence="1">
        <text>a ribonucleotide in rRNA + S-adenosyl-L-methionine = a 2'-O-methylribonucleotide in rRNA + S-adenosyl-L-homocysteine + H(+)</text>
        <dbReference type="Rhea" id="RHEA:48628"/>
        <dbReference type="Rhea" id="RHEA-COMP:12164"/>
        <dbReference type="Rhea" id="RHEA-COMP:12165"/>
        <dbReference type="ChEBI" id="CHEBI:15378"/>
        <dbReference type="ChEBI" id="CHEBI:57856"/>
        <dbReference type="ChEBI" id="CHEBI:59789"/>
        <dbReference type="ChEBI" id="CHEBI:90675"/>
        <dbReference type="ChEBI" id="CHEBI:90676"/>
    </reaction>
    <physiologicalReaction direction="left-to-right" evidence="1">
        <dbReference type="Rhea" id="RHEA:48629"/>
    </physiologicalReaction>
</comment>
<comment type="catalytic activity">
    <reaction evidence="9">
        <text>a ribonucleotide in U6 snRNA + S-adenosyl-L-methionine = a 2'-O-methylribonucleotide in U6 snRNA + S-adenosyl-L-homocysteine + H(+)</text>
        <dbReference type="Rhea" id="RHEA:63088"/>
        <dbReference type="Rhea" id="RHEA-COMP:16262"/>
        <dbReference type="Rhea" id="RHEA-COMP:16263"/>
        <dbReference type="ChEBI" id="CHEBI:15378"/>
        <dbReference type="ChEBI" id="CHEBI:57856"/>
        <dbReference type="ChEBI" id="CHEBI:59789"/>
        <dbReference type="ChEBI" id="CHEBI:90675"/>
        <dbReference type="ChEBI" id="CHEBI:90676"/>
    </reaction>
    <physiologicalReaction direction="left-to-right" evidence="9">
        <dbReference type="Rhea" id="RHEA:63089"/>
    </physiologicalReaction>
</comment>
<comment type="subunit">
    <text evidence="2 3">Component of box C/D small nucleolar ribonucleoprotein (snoRNP) particles that contain SNU13, FBL, NOP5 and NOP56, plus a guide RNA. It is associated with the U3, U8, U13, X and Y small nuclear RNAs. Component of several ribosomal and nucleolar protein complexes. Part of the small subunit (SSU) processome, composed of more than 70 proteins and the RNA chaperone small nucleolar RNA (snoRNA) U3 (By similarity). Interacts with PRMT5 and UTP20. Interacts with DDX5 and C1QBP. Interacts with NOL11. Interacts with PIH1D1. Interacts with RRP1B (By similarity). Interacts with NOLC1 (By similarity). Interacts with SDE2 (By similarity). Interacts with NOP2 and NOP56 (By similarity).</text>
</comment>
<comment type="subcellular location">
    <subcellularLocation>
        <location evidence="6">Nucleus</location>
        <location evidence="6">Nucleolus</location>
    </subcellularLocation>
    <subcellularLocation>
        <location evidence="9">Nucleus</location>
        <location evidence="9">Nucleoplasm</location>
    </subcellularLocation>
    <text evidence="2">Fibrillar region of the nucleolus.</text>
</comment>
<comment type="PTM">
    <text evidence="3">By homology to other fibrillarins, some or all of the N-terminal domain arginines are modified to asymmetric dimethylarginine (DMA).</text>
</comment>
<comment type="PTM">
    <text evidence="2">Ubiquitinated. Ubiquitination leads to proteasomal degradation. Deubiquitinated by USP36.</text>
</comment>
<comment type="PTM">
    <text evidence="2">Acetylated by CREBBP/CBP, preventing methylation of 'Gln-105' of histone H2A (H2AQ104me), without affecting rRNA methylation. Deacetylation by SIRT7 restores methylation of 'Gln-105' of histone H2A (H2AQ104me).</text>
</comment>
<comment type="similarity">
    <text evidence="8">Belongs to the methyltransferase superfamily. Fibrillarin family.</text>
</comment>